<comment type="function">
    <text evidence="5 7 8">Embryonic stem (ES) cell-specific transcription factor required to maintain ES cell pluripotency. Can both activate and /or repress expression of target genes, depending on the context. Specifically binds the 5'-[GA]CGCNNGCG[CT]-3' DNA consensus sequence. Regulates expression of POU5F1/OCT4, ZSCAN4 and ALYREF/THOC4.</text>
</comment>
<comment type="subunit">
    <text evidence="8">Interacts with POU5F1/OCT4 and SOX2.</text>
</comment>
<comment type="subcellular location">
    <subcellularLocation>
        <location evidence="3 5 7">Nucleus</location>
    </subcellularLocation>
</comment>
<comment type="alternative products">
    <event type="alternative splicing"/>
    <isoform>
        <id>Q3URR7-1</id>
        <name>1</name>
        <sequence type="displayed"/>
    </isoform>
    <isoform>
        <id>Q3URR7-2</id>
        <name>2</name>
        <sequence type="described" ref="VSP_039228"/>
    </isoform>
    <isoform>
        <id>Q3URR7-3</id>
        <name>3</name>
        <sequence type="described" ref="VSP_039227"/>
    </isoform>
</comment>
<comment type="tissue specificity">
    <text evidence="5 7">Embryonic stem (ES) cell-specific. Not expressed in adult, except in testis.</text>
</comment>
<comment type="developmental stage">
    <text evidence="5">Expressed throughout embryogenesis.</text>
</comment>
<comment type="induction">
    <text evidence="6">Transcriptionally regulated by POU5F1/OCT4 and SOX2.</text>
</comment>
<comment type="PTM">
    <text evidence="1">Methylated at Gln-485 by N6AMT1.</text>
</comment>
<comment type="disruption phenotype">
    <text evidence="9">Knockout results in high lethality in male and female mice, with most homozygous animals dying before weaning. Knockout 14.5 dpc embryos show facial asymmetry along with inner and outer ear malformations.</text>
</comment>
<keyword id="KW-0002">3D-structure</keyword>
<keyword id="KW-0010">Activator</keyword>
<keyword id="KW-0025">Alternative splicing</keyword>
<keyword id="KW-0238">DNA-binding</keyword>
<keyword id="KW-0479">Metal-binding</keyword>
<keyword id="KW-0488">Methylation</keyword>
<keyword id="KW-0539">Nucleus</keyword>
<keyword id="KW-0597">Phosphoprotein</keyword>
<keyword id="KW-1185">Reference proteome</keyword>
<keyword id="KW-0677">Repeat</keyword>
<keyword id="KW-0678">Repressor</keyword>
<keyword id="KW-0804">Transcription</keyword>
<keyword id="KW-0805">Transcription regulation</keyword>
<keyword id="KW-0862">Zinc</keyword>
<keyword id="KW-0863">Zinc-finger</keyword>
<name>ZSC10_MOUSE</name>
<sequence>MLAEPVPDALEQEHPGAVKLEEDEVGEEDPRLAESRPRPEVAHQLFRCFQYQEDMGPRASLGRLRELCNHWLRPALHTKKQILELLVLEQFLSVLPPHVLSRLHGQPLRDGEEVVQLLEGVPRDISHMGPLDFSFSAGKNAPADIISEEQNSPSQVPSHSPQTELPSEEIPALHPLNELPPPQPAPIRPAEPEEWRLAPSSNWPMSPEPQEILQDPRESNPSQGPSWLEENSRDQELAAVLESLTFEDTSEKRAWPANPLGFGSRMPDNEELKVEEPKVTTWPVVIGAESQTEKPEVAGEPLTQTVGQETSSTGWGGTPADGSEVVKVRGASDAPEPQGEMQFICTYCGVNFPEMSHLQAHQLQSHPNLQPHPSSRSFRCLWCGKTFGRSSILKLHMRTHTDERPHACHLCNRRFRQSSHLTKHLLTHSSEPAFRCAECNQGFQRRSSLMQHLLAHAQGKNLTPNPEGKTKVPEMAAVLCSHCGQTFKRRSSLKRHLRNHAKDKDHLSSEDPGSLSSSQESNPYVCSDCGKAFRQSEQLMIHTRRVHTRERPFSCQVCGRCFTQNSQLISHQQIHTGEKPHACPQCSKRFVRRAGLARHLLTHGSLRPYHCAQCGKSFRQMRDLTRHVRCHTGEKPCRCNECGEGFTQNAHLARHQRIHTGEKPHACDICGHRFRNSSNLARHRRSHTGERPYSCPTCGRSFRRNAHLQRHLITHTGSKQEKEVPQECPECGKSFNRSCNLLRHLLVHTGARPYSCALCGRSFSRNSHLLRHLRTHARESLY</sequence>
<dbReference type="EMBL" id="DQ323929">
    <property type="protein sequence ID" value="ABC54589.1"/>
    <property type="molecule type" value="mRNA"/>
</dbReference>
<dbReference type="EMBL" id="DQ323930">
    <property type="protein sequence ID" value="ABC54590.1"/>
    <property type="molecule type" value="mRNA"/>
</dbReference>
<dbReference type="EMBL" id="DQ323931">
    <property type="protein sequence ID" value="ABC54591.1"/>
    <property type="molecule type" value="mRNA"/>
</dbReference>
<dbReference type="EMBL" id="EF152498">
    <property type="protein sequence ID" value="ABM45916.1"/>
    <property type="molecule type" value="mRNA"/>
</dbReference>
<dbReference type="EMBL" id="AK141259">
    <property type="protein sequence ID" value="BAE24621.1"/>
    <property type="molecule type" value="mRNA"/>
</dbReference>
<dbReference type="EMBL" id="CH466606">
    <property type="protein sequence ID" value="EDL22251.1"/>
    <property type="molecule type" value="Genomic_DNA"/>
</dbReference>
<dbReference type="EMBL" id="BC145638">
    <property type="protein sequence ID" value="AAI45639.1"/>
    <property type="molecule type" value="mRNA"/>
</dbReference>
<dbReference type="CCDS" id="CCDS28451.1">
    <molecule id="Q3URR7-1"/>
</dbReference>
<dbReference type="CCDS" id="CCDS70766.1">
    <molecule id="Q3URR7-2"/>
</dbReference>
<dbReference type="CCDS" id="CCDS79510.1">
    <molecule id="Q3URR7-3"/>
</dbReference>
<dbReference type="RefSeq" id="NP_001028597.2">
    <molecule id="Q3URR7-1"/>
    <property type="nucleotide sequence ID" value="NM_001033425.4"/>
</dbReference>
<dbReference type="RefSeq" id="NP_001276410.1">
    <molecule id="Q3URR7-2"/>
    <property type="nucleotide sequence ID" value="NM_001289481.1"/>
</dbReference>
<dbReference type="RefSeq" id="NP_001276411.1">
    <molecule id="Q3URR7-3"/>
    <property type="nucleotide sequence ID" value="NM_001289482.1"/>
</dbReference>
<dbReference type="RefSeq" id="NP_001276412.1">
    <property type="nucleotide sequence ID" value="NM_001289483.1"/>
</dbReference>
<dbReference type="RefSeq" id="NP_001276413.1">
    <property type="nucleotide sequence ID" value="NM_001289484.1"/>
</dbReference>
<dbReference type="PDB" id="4E6S">
    <property type="method" value="X-ray"/>
    <property type="resolution" value="1.85 A"/>
    <property type="chains" value="A=36-128"/>
</dbReference>
<dbReference type="PDBsum" id="4E6S"/>
<dbReference type="SMR" id="Q3URR7"/>
<dbReference type="BioGRID" id="237126">
    <property type="interactions" value="24"/>
</dbReference>
<dbReference type="FunCoup" id="Q3URR7">
    <property type="interactions" value="147"/>
</dbReference>
<dbReference type="STRING" id="10090.ENSMUSP00000093255"/>
<dbReference type="GlyGen" id="Q3URR7">
    <property type="glycosylation" value="1 site"/>
</dbReference>
<dbReference type="iPTMnet" id="Q3URR7"/>
<dbReference type="PhosphoSitePlus" id="Q3URR7"/>
<dbReference type="PaxDb" id="10090-ENSMUSP00000093255"/>
<dbReference type="PeptideAtlas" id="Q3URR7"/>
<dbReference type="ProteomicsDB" id="302148">
    <molecule id="Q3URR7-1"/>
</dbReference>
<dbReference type="ProteomicsDB" id="302149">
    <molecule id="Q3URR7-2"/>
</dbReference>
<dbReference type="ProteomicsDB" id="302150">
    <molecule id="Q3URR7-3"/>
</dbReference>
<dbReference type="Antibodypedia" id="58023">
    <property type="antibodies" value="24 antibodies from 11 providers"/>
</dbReference>
<dbReference type="DNASU" id="332221"/>
<dbReference type="Ensembl" id="ENSMUST00000095595.9">
    <molecule id="Q3URR7-1"/>
    <property type="protein sequence ID" value="ENSMUSP00000093255.3"/>
    <property type="gene ID" value="ENSMUSG00000023902.19"/>
</dbReference>
<dbReference type="Ensembl" id="ENSMUST00000115509.8">
    <molecule id="Q3URR7-3"/>
    <property type="protein sequence ID" value="ENSMUSP00000111171.2"/>
    <property type="gene ID" value="ENSMUSG00000023902.19"/>
</dbReference>
<dbReference type="Ensembl" id="ENSMUST00000120967.8">
    <molecule id="Q3URR7-2"/>
    <property type="protein sequence ID" value="ENSMUSP00000113386.2"/>
    <property type="gene ID" value="ENSMUSG00000023902.19"/>
</dbReference>
<dbReference type="GeneID" id="332221"/>
<dbReference type="KEGG" id="mmu:332221"/>
<dbReference type="UCSC" id="uc008ask.3">
    <molecule id="Q3URR7-2"/>
    <property type="organism name" value="mouse"/>
</dbReference>
<dbReference type="UCSC" id="uc008asl.2">
    <molecule id="Q3URR7-1"/>
    <property type="organism name" value="mouse"/>
</dbReference>
<dbReference type="UCSC" id="uc008asm.2">
    <molecule id="Q3URR7-3"/>
    <property type="organism name" value="mouse"/>
</dbReference>
<dbReference type="AGR" id="MGI:3040700"/>
<dbReference type="CTD" id="84891"/>
<dbReference type="MGI" id="MGI:3040700">
    <property type="gene designation" value="Zscan10"/>
</dbReference>
<dbReference type="VEuPathDB" id="HostDB:ENSMUSG00000023902"/>
<dbReference type="eggNOG" id="KOG1721">
    <property type="taxonomic scope" value="Eukaryota"/>
</dbReference>
<dbReference type="GeneTree" id="ENSGT00940000162513"/>
<dbReference type="HOGENOM" id="CLU_002678_49_8_1"/>
<dbReference type="InParanoid" id="Q3URR7"/>
<dbReference type="OMA" id="AKDQGHQ"/>
<dbReference type="OrthoDB" id="6365676at2759"/>
<dbReference type="PhylomeDB" id="Q3URR7"/>
<dbReference type="TreeFam" id="TF338010"/>
<dbReference type="BioGRID-ORCS" id="332221">
    <property type="hits" value="3 hits in 76 CRISPR screens"/>
</dbReference>
<dbReference type="EvolutionaryTrace" id="Q3URR7"/>
<dbReference type="PRO" id="PR:Q3URR7"/>
<dbReference type="Proteomes" id="UP000000589">
    <property type="component" value="Chromosome 17"/>
</dbReference>
<dbReference type="RNAct" id="Q3URR7">
    <property type="molecule type" value="protein"/>
</dbReference>
<dbReference type="Bgee" id="ENSMUSG00000023902">
    <property type="expression patterns" value="Expressed in epiblast (generic) and 65 other cell types or tissues"/>
</dbReference>
<dbReference type="ExpressionAtlas" id="Q3URR7">
    <property type="expression patterns" value="baseline and differential"/>
</dbReference>
<dbReference type="GO" id="GO:0005634">
    <property type="term" value="C:nucleus"/>
    <property type="evidence" value="ECO:0000314"/>
    <property type="project" value="UniProtKB"/>
</dbReference>
<dbReference type="GO" id="GO:0003700">
    <property type="term" value="F:DNA-binding transcription factor activity"/>
    <property type="evidence" value="ECO:0000315"/>
    <property type="project" value="UniProtKB"/>
</dbReference>
<dbReference type="GO" id="GO:0043565">
    <property type="term" value="F:sequence-specific DNA binding"/>
    <property type="evidence" value="ECO:0000314"/>
    <property type="project" value="UniProtKB"/>
</dbReference>
<dbReference type="GO" id="GO:0008270">
    <property type="term" value="F:zinc ion binding"/>
    <property type="evidence" value="ECO:0007669"/>
    <property type="project" value="UniProtKB-KW"/>
</dbReference>
<dbReference type="GO" id="GO:0045892">
    <property type="term" value="P:negative regulation of DNA-templated transcription"/>
    <property type="evidence" value="ECO:0000315"/>
    <property type="project" value="UniProtKB"/>
</dbReference>
<dbReference type="GO" id="GO:0048863">
    <property type="term" value="P:stem cell differentiation"/>
    <property type="evidence" value="ECO:0000304"/>
    <property type="project" value="UniProtKB"/>
</dbReference>
<dbReference type="CDD" id="cd07936">
    <property type="entry name" value="SCAN"/>
    <property type="match status" value="1"/>
</dbReference>
<dbReference type="FunFam" id="3.30.160.60:FF:001215">
    <property type="entry name" value="Zinc finger 202 m1"/>
    <property type="match status" value="1"/>
</dbReference>
<dbReference type="FunFam" id="3.30.160.60:FF:000982">
    <property type="entry name" value="Zinc finger and SCAN domain containing 10"/>
    <property type="match status" value="1"/>
</dbReference>
<dbReference type="FunFam" id="3.30.160.60:FF:001080">
    <property type="entry name" value="Zinc finger and SCAN domain containing 10"/>
    <property type="match status" value="1"/>
</dbReference>
<dbReference type="FunFam" id="3.30.160.60:FF:001917">
    <property type="entry name" value="Zinc finger and SCAN domain containing 10"/>
    <property type="match status" value="1"/>
</dbReference>
<dbReference type="FunFam" id="3.30.160.60:FF:003306">
    <property type="entry name" value="Zinc finger and SCAN domain-containing protein 10"/>
    <property type="match status" value="1"/>
</dbReference>
<dbReference type="FunFam" id="3.30.160.60:FF:000478">
    <property type="entry name" value="Zinc finger protein 133"/>
    <property type="match status" value="1"/>
</dbReference>
<dbReference type="FunFam" id="3.30.160.60:FF:000295">
    <property type="entry name" value="zinc finger protein 19"/>
    <property type="match status" value="1"/>
</dbReference>
<dbReference type="FunFam" id="3.30.160.60:FF:001228">
    <property type="entry name" value="Zinc finger protein 236"/>
    <property type="match status" value="1"/>
</dbReference>
<dbReference type="FunFam" id="1.10.4020.10:FF:000001">
    <property type="entry name" value="zinc finger protein 263 isoform X1"/>
    <property type="match status" value="1"/>
</dbReference>
<dbReference type="FunFam" id="3.30.160.60:FF:001049">
    <property type="entry name" value="zinc finger protein 319"/>
    <property type="match status" value="1"/>
</dbReference>
<dbReference type="FunFam" id="3.30.160.60:FF:000690">
    <property type="entry name" value="Zinc finger protein 354C"/>
    <property type="match status" value="1"/>
</dbReference>
<dbReference type="FunFam" id="3.30.160.60:FF:001498">
    <property type="entry name" value="Zinc finger protein 404"/>
    <property type="match status" value="1"/>
</dbReference>
<dbReference type="Gene3D" id="3.30.160.60">
    <property type="entry name" value="Classic Zinc Finger"/>
    <property type="match status" value="13"/>
</dbReference>
<dbReference type="Gene3D" id="1.10.4020.10">
    <property type="entry name" value="DNA breaking-rejoining enzymes"/>
    <property type="match status" value="1"/>
</dbReference>
<dbReference type="InterPro" id="IPR003309">
    <property type="entry name" value="SCAN_dom"/>
</dbReference>
<dbReference type="InterPro" id="IPR038269">
    <property type="entry name" value="SCAN_sf"/>
</dbReference>
<dbReference type="InterPro" id="IPR036236">
    <property type="entry name" value="Znf_C2H2_sf"/>
</dbReference>
<dbReference type="InterPro" id="IPR013087">
    <property type="entry name" value="Znf_C2H2_type"/>
</dbReference>
<dbReference type="PANTHER" id="PTHR24408">
    <property type="entry name" value="ZINC FINGER PROTEIN"/>
    <property type="match status" value="1"/>
</dbReference>
<dbReference type="PANTHER" id="PTHR24408:SF34">
    <property type="entry name" value="ZINC FINGER PROTEIN 672-RELATED"/>
    <property type="match status" value="1"/>
</dbReference>
<dbReference type="Pfam" id="PF02023">
    <property type="entry name" value="SCAN"/>
    <property type="match status" value="1"/>
</dbReference>
<dbReference type="Pfam" id="PF00096">
    <property type="entry name" value="zf-C2H2"/>
    <property type="match status" value="13"/>
</dbReference>
<dbReference type="SMART" id="SM00431">
    <property type="entry name" value="SCAN"/>
    <property type="match status" value="1"/>
</dbReference>
<dbReference type="SMART" id="SM00355">
    <property type="entry name" value="ZnF_C2H2"/>
    <property type="match status" value="14"/>
</dbReference>
<dbReference type="SUPFAM" id="SSF57667">
    <property type="entry name" value="beta-beta-alpha zinc fingers"/>
    <property type="match status" value="8"/>
</dbReference>
<dbReference type="SUPFAM" id="SSF47353">
    <property type="entry name" value="Retrovirus capsid dimerization domain-like"/>
    <property type="match status" value="1"/>
</dbReference>
<dbReference type="PROSITE" id="PS50804">
    <property type="entry name" value="SCAN_BOX"/>
    <property type="match status" value="1"/>
</dbReference>
<dbReference type="PROSITE" id="PS00028">
    <property type="entry name" value="ZINC_FINGER_C2H2_1"/>
    <property type="match status" value="14"/>
</dbReference>
<dbReference type="PROSITE" id="PS50157">
    <property type="entry name" value="ZINC_FINGER_C2H2_2"/>
    <property type="match status" value="14"/>
</dbReference>
<evidence type="ECO:0000250" key="1">
    <source>
        <dbReference type="UniProtKB" id="Q96SZ4"/>
    </source>
</evidence>
<evidence type="ECO:0000255" key="2">
    <source>
        <dbReference type="PROSITE-ProRule" id="PRU00042"/>
    </source>
</evidence>
<evidence type="ECO:0000255" key="3">
    <source>
        <dbReference type="PROSITE-ProRule" id="PRU00187"/>
    </source>
</evidence>
<evidence type="ECO:0000256" key="4">
    <source>
        <dbReference type="SAM" id="MobiDB-lite"/>
    </source>
</evidence>
<evidence type="ECO:0000269" key="5">
    <source>
    </source>
</evidence>
<evidence type="ECO:0000269" key="6">
    <source>
    </source>
</evidence>
<evidence type="ECO:0000269" key="7">
    <source>
    </source>
</evidence>
<evidence type="ECO:0000269" key="8">
    <source>
    </source>
</evidence>
<evidence type="ECO:0000269" key="9">
    <source>
    </source>
</evidence>
<evidence type="ECO:0000303" key="10">
    <source>
    </source>
</evidence>
<evidence type="ECO:0000303" key="11">
    <source>
    </source>
</evidence>
<evidence type="ECO:0000305" key="12"/>
<evidence type="ECO:0007829" key="13">
    <source>
        <dbReference type="PDB" id="4E6S"/>
    </source>
</evidence>
<protein>
    <recommendedName>
        <fullName>Zinc finger and SCAN domain-containing protein 10</fullName>
    </recommendedName>
    <alternativeName>
        <fullName>Zinc finger protein 206</fullName>
    </alternativeName>
</protein>
<proteinExistence type="evidence at protein level"/>
<feature type="chain" id="PRO_0000394248" description="Zinc finger and SCAN domain-containing protein 10">
    <location>
        <begin position="1"/>
        <end position="782"/>
    </location>
</feature>
<feature type="domain" description="SCAN box" evidence="3">
    <location>
        <begin position="1"/>
        <end position="71"/>
    </location>
</feature>
<feature type="zinc finger region" description="C2H2-type 1" evidence="2">
    <location>
        <begin position="292"/>
        <end position="315"/>
    </location>
</feature>
<feature type="zinc finger region" description="C2H2-type 2" evidence="2">
    <location>
        <begin position="321"/>
        <end position="343"/>
    </location>
</feature>
<feature type="zinc finger region" description="C2H2-type 3" evidence="2">
    <location>
        <begin position="349"/>
        <end position="371"/>
    </location>
</feature>
<feature type="zinc finger region" description="C2H2-type 4" evidence="2">
    <location>
        <begin position="377"/>
        <end position="399"/>
    </location>
</feature>
<feature type="zinc finger region" description="C2H2-type 5" evidence="2">
    <location>
        <begin position="421"/>
        <end position="443"/>
    </location>
</feature>
<feature type="zinc finger region" description="C2H2-type 6" evidence="2">
    <location>
        <begin position="467"/>
        <end position="489"/>
    </location>
</feature>
<feature type="zinc finger region" description="C2H2-type 7" evidence="2">
    <location>
        <begin position="495"/>
        <end position="517"/>
    </location>
</feature>
<feature type="zinc finger region" description="C2H2-type 8" evidence="2">
    <location>
        <begin position="523"/>
        <end position="545"/>
    </location>
</feature>
<feature type="zinc finger region" description="C2H2-type 9" evidence="2">
    <location>
        <begin position="551"/>
        <end position="573"/>
    </location>
</feature>
<feature type="zinc finger region" description="C2H2-type 10" evidence="2">
    <location>
        <begin position="579"/>
        <end position="601"/>
    </location>
</feature>
<feature type="zinc finger region" description="C2H2-type 11" evidence="2">
    <location>
        <begin position="607"/>
        <end position="629"/>
    </location>
</feature>
<feature type="zinc finger region" description="C2H2-type 12" evidence="2">
    <location>
        <begin position="635"/>
        <end position="657"/>
    </location>
</feature>
<feature type="zinc finger region" description="C2H2-type 13" evidence="2">
    <location>
        <begin position="669"/>
        <end position="691"/>
    </location>
</feature>
<feature type="zinc finger region" description="C2H2-type 14" evidence="2">
    <location>
        <begin position="697"/>
        <end position="719"/>
    </location>
</feature>
<feature type="region of interest" description="Disordered" evidence="4">
    <location>
        <begin position="1"/>
        <end position="37"/>
    </location>
</feature>
<feature type="region of interest" description="Disordered" evidence="4">
    <location>
        <begin position="197"/>
        <end position="233"/>
    </location>
</feature>
<feature type="region of interest" description="Disordered" evidence="4">
    <location>
        <begin position="290"/>
        <end position="321"/>
    </location>
</feature>
<feature type="region of interest" description="Disordered" evidence="4">
    <location>
        <begin position="491"/>
        <end position="522"/>
    </location>
</feature>
<feature type="compositionally biased region" description="Basic and acidic residues" evidence="4">
    <location>
        <begin position="11"/>
        <end position="20"/>
    </location>
</feature>
<feature type="compositionally biased region" description="Basic and acidic residues" evidence="4">
    <location>
        <begin position="28"/>
        <end position="37"/>
    </location>
</feature>
<feature type="compositionally biased region" description="Polar residues" evidence="4">
    <location>
        <begin position="302"/>
        <end position="313"/>
    </location>
</feature>
<feature type="compositionally biased region" description="Basic and acidic residues" evidence="4">
    <location>
        <begin position="500"/>
        <end position="509"/>
    </location>
</feature>
<feature type="compositionally biased region" description="Low complexity" evidence="4">
    <location>
        <begin position="510"/>
        <end position="521"/>
    </location>
</feature>
<feature type="modified residue" description="Phosphoserine" evidence="1">
    <location>
        <position position="160"/>
    </location>
</feature>
<feature type="modified residue" description="Phosphoserine" evidence="1">
    <location>
        <position position="206"/>
    </location>
</feature>
<feature type="modified residue" description="N5-methylglutamine" evidence="1">
    <location>
        <position position="485"/>
    </location>
</feature>
<feature type="splice variant" id="VSP_039227" description="In isoform 3." evidence="11">
    <location>
        <begin position="131"/>
        <end position="240"/>
    </location>
</feature>
<feature type="splice variant" id="VSP_039228" description="In isoform 2." evidence="10 11">
    <location>
        <begin position="328"/>
        <end position="359"/>
    </location>
</feature>
<feature type="sequence conflict" description="In Ref. 1; ABC54589/ABC54590/ABC54591, 2; ABM45916 and 4; EDL22251." evidence="12" ref="1 2 4">
    <original>V</original>
    <variation>E</variation>
    <location>
        <position position="306"/>
    </location>
</feature>
<feature type="sequence conflict" description="In Ref. 3; BAE24621." evidence="12" ref="3">
    <original>V</original>
    <variation>L</variation>
    <location>
        <position position="546"/>
    </location>
</feature>
<feature type="helix" evidence="13">
    <location>
        <begin position="39"/>
        <end position="47"/>
    </location>
</feature>
<feature type="turn" evidence="13">
    <location>
        <begin position="53"/>
        <end position="55"/>
    </location>
</feature>
<feature type="helix" evidence="13">
    <location>
        <begin position="57"/>
        <end position="72"/>
    </location>
</feature>
<feature type="turn" evidence="13">
    <location>
        <begin position="74"/>
        <end position="76"/>
    </location>
</feature>
<feature type="helix" evidence="13">
    <location>
        <begin position="79"/>
        <end position="93"/>
    </location>
</feature>
<feature type="helix" evidence="13">
    <location>
        <begin position="97"/>
        <end position="100"/>
    </location>
</feature>
<feature type="helix" evidence="13">
    <location>
        <begin position="101"/>
        <end position="103"/>
    </location>
</feature>
<feature type="helix" evidence="13">
    <location>
        <begin position="111"/>
        <end position="116"/>
    </location>
</feature>
<organism>
    <name type="scientific">Mus musculus</name>
    <name type="common">Mouse</name>
    <dbReference type="NCBI Taxonomy" id="10090"/>
    <lineage>
        <taxon>Eukaryota</taxon>
        <taxon>Metazoa</taxon>
        <taxon>Chordata</taxon>
        <taxon>Craniata</taxon>
        <taxon>Vertebrata</taxon>
        <taxon>Euteleostomi</taxon>
        <taxon>Mammalia</taxon>
        <taxon>Eutheria</taxon>
        <taxon>Euarchontoglires</taxon>
        <taxon>Glires</taxon>
        <taxon>Rodentia</taxon>
        <taxon>Myomorpha</taxon>
        <taxon>Muroidea</taxon>
        <taxon>Muridae</taxon>
        <taxon>Murinae</taxon>
        <taxon>Mus</taxon>
        <taxon>Mus</taxon>
    </lineage>
</organism>
<gene>
    <name type="primary">Zscan10</name>
    <name type="synonym">Zfp206</name>
</gene>
<accession>Q3URR7</accession>
<accession>B7ZP53</accession>
<accession>Q20D61</accession>
<accession>Q20D62</accession>
<accession>Q20D63</accession>
<reference key="1">
    <citation type="journal article" date="2006" name="Nucleic Acids Res.">
        <title>Zfp206 regulates ES cell gene expression and differentiation.</title>
        <authorList>
            <person name="Zhang W."/>
            <person name="Walker E."/>
            <person name="Tamplin O.J."/>
            <person name="Rossant J."/>
            <person name="Stanford W.L."/>
            <person name="Hughes T.R."/>
        </authorList>
    </citation>
    <scope>NUCLEOTIDE SEQUENCE [MRNA] (ISOFORMS 1; 2 AND 3)</scope>
    <scope>FUNCTION</scope>
    <scope>SUBCELLULAR LOCATION</scope>
    <scope>TISSUE SPECIFICITY</scope>
    <scope>DEVELOPMENTAL STAGE</scope>
    <source>
        <strain>129S1/Sv</strain>
    </source>
</reference>
<reference key="2">
    <citation type="journal article" date="2007" name="Stem Cells">
        <title>Zfp206 is a transcription factor that controls pluripotency of embryonic stem cells.</title>
        <authorList>
            <person name="Wang Z.X."/>
            <person name="Kueh J.L."/>
            <person name="Teh C.H."/>
            <person name="Rossbach M."/>
            <person name="Lim L."/>
            <person name="Li P."/>
            <person name="Wong K.Y."/>
            <person name="Lufkin T."/>
            <person name="Robson P."/>
            <person name="Stanton L.W."/>
        </authorList>
    </citation>
    <scope>NUCLEOTIDE SEQUENCE [MRNA] (ISOFORM 1)</scope>
    <scope>FUNCTION</scope>
    <scope>SUBCELLULAR LOCATION</scope>
    <scope>TISSUE SPECIFICITY</scope>
    <source>
        <strain>129P2</strain>
    </source>
</reference>
<reference key="3">
    <citation type="journal article" date="2005" name="Science">
        <title>The transcriptional landscape of the mammalian genome.</title>
        <authorList>
            <person name="Carninci P."/>
            <person name="Kasukawa T."/>
            <person name="Katayama S."/>
            <person name="Gough J."/>
            <person name="Frith M.C."/>
            <person name="Maeda N."/>
            <person name="Oyama R."/>
            <person name="Ravasi T."/>
            <person name="Lenhard B."/>
            <person name="Wells C."/>
            <person name="Kodzius R."/>
            <person name="Shimokawa K."/>
            <person name="Bajic V.B."/>
            <person name="Brenner S.E."/>
            <person name="Batalov S."/>
            <person name="Forrest A.R."/>
            <person name="Zavolan M."/>
            <person name="Davis M.J."/>
            <person name="Wilming L.G."/>
            <person name="Aidinis V."/>
            <person name="Allen J.E."/>
            <person name="Ambesi-Impiombato A."/>
            <person name="Apweiler R."/>
            <person name="Aturaliya R.N."/>
            <person name="Bailey T.L."/>
            <person name="Bansal M."/>
            <person name="Baxter L."/>
            <person name="Beisel K.W."/>
            <person name="Bersano T."/>
            <person name="Bono H."/>
            <person name="Chalk A.M."/>
            <person name="Chiu K.P."/>
            <person name="Choudhary V."/>
            <person name="Christoffels A."/>
            <person name="Clutterbuck D.R."/>
            <person name="Crowe M.L."/>
            <person name="Dalla E."/>
            <person name="Dalrymple B.P."/>
            <person name="de Bono B."/>
            <person name="Della Gatta G."/>
            <person name="di Bernardo D."/>
            <person name="Down T."/>
            <person name="Engstrom P."/>
            <person name="Fagiolini M."/>
            <person name="Faulkner G."/>
            <person name="Fletcher C.F."/>
            <person name="Fukushima T."/>
            <person name="Furuno M."/>
            <person name="Futaki S."/>
            <person name="Gariboldi M."/>
            <person name="Georgii-Hemming P."/>
            <person name="Gingeras T.R."/>
            <person name="Gojobori T."/>
            <person name="Green R.E."/>
            <person name="Gustincich S."/>
            <person name="Harbers M."/>
            <person name="Hayashi Y."/>
            <person name="Hensch T.K."/>
            <person name="Hirokawa N."/>
            <person name="Hill D."/>
            <person name="Huminiecki L."/>
            <person name="Iacono M."/>
            <person name="Ikeo K."/>
            <person name="Iwama A."/>
            <person name="Ishikawa T."/>
            <person name="Jakt M."/>
            <person name="Kanapin A."/>
            <person name="Katoh M."/>
            <person name="Kawasawa Y."/>
            <person name="Kelso J."/>
            <person name="Kitamura H."/>
            <person name="Kitano H."/>
            <person name="Kollias G."/>
            <person name="Krishnan S.P."/>
            <person name="Kruger A."/>
            <person name="Kummerfeld S.K."/>
            <person name="Kurochkin I.V."/>
            <person name="Lareau L.F."/>
            <person name="Lazarevic D."/>
            <person name="Lipovich L."/>
            <person name="Liu J."/>
            <person name="Liuni S."/>
            <person name="McWilliam S."/>
            <person name="Madan Babu M."/>
            <person name="Madera M."/>
            <person name="Marchionni L."/>
            <person name="Matsuda H."/>
            <person name="Matsuzawa S."/>
            <person name="Miki H."/>
            <person name="Mignone F."/>
            <person name="Miyake S."/>
            <person name="Morris K."/>
            <person name="Mottagui-Tabar S."/>
            <person name="Mulder N."/>
            <person name="Nakano N."/>
            <person name="Nakauchi H."/>
            <person name="Ng P."/>
            <person name="Nilsson R."/>
            <person name="Nishiguchi S."/>
            <person name="Nishikawa S."/>
            <person name="Nori F."/>
            <person name="Ohara O."/>
            <person name="Okazaki Y."/>
            <person name="Orlando V."/>
            <person name="Pang K.C."/>
            <person name="Pavan W.J."/>
            <person name="Pavesi G."/>
            <person name="Pesole G."/>
            <person name="Petrovsky N."/>
            <person name="Piazza S."/>
            <person name="Reed J."/>
            <person name="Reid J.F."/>
            <person name="Ring B.Z."/>
            <person name="Ringwald M."/>
            <person name="Rost B."/>
            <person name="Ruan Y."/>
            <person name="Salzberg S.L."/>
            <person name="Sandelin A."/>
            <person name="Schneider C."/>
            <person name="Schoenbach C."/>
            <person name="Sekiguchi K."/>
            <person name="Semple C.A."/>
            <person name="Seno S."/>
            <person name="Sessa L."/>
            <person name="Sheng Y."/>
            <person name="Shibata Y."/>
            <person name="Shimada H."/>
            <person name="Shimada K."/>
            <person name="Silva D."/>
            <person name="Sinclair B."/>
            <person name="Sperling S."/>
            <person name="Stupka E."/>
            <person name="Sugiura K."/>
            <person name="Sultana R."/>
            <person name="Takenaka Y."/>
            <person name="Taki K."/>
            <person name="Tammoja K."/>
            <person name="Tan S.L."/>
            <person name="Tang S."/>
            <person name="Taylor M.S."/>
            <person name="Tegner J."/>
            <person name="Teichmann S.A."/>
            <person name="Ueda H.R."/>
            <person name="van Nimwegen E."/>
            <person name="Verardo R."/>
            <person name="Wei C.L."/>
            <person name="Yagi K."/>
            <person name="Yamanishi H."/>
            <person name="Zabarovsky E."/>
            <person name="Zhu S."/>
            <person name="Zimmer A."/>
            <person name="Hide W."/>
            <person name="Bult C."/>
            <person name="Grimmond S.M."/>
            <person name="Teasdale R.D."/>
            <person name="Liu E.T."/>
            <person name="Brusic V."/>
            <person name="Quackenbush J."/>
            <person name="Wahlestedt C."/>
            <person name="Mattick J.S."/>
            <person name="Hume D.A."/>
            <person name="Kai C."/>
            <person name="Sasaki D."/>
            <person name="Tomaru Y."/>
            <person name="Fukuda S."/>
            <person name="Kanamori-Katayama M."/>
            <person name="Suzuki M."/>
            <person name="Aoki J."/>
            <person name="Arakawa T."/>
            <person name="Iida J."/>
            <person name="Imamura K."/>
            <person name="Itoh M."/>
            <person name="Kato T."/>
            <person name="Kawaji H."/>
            <person name="Kawagashira N."/>
            <person name="Kawashima T."/>
            <person name="Kojima M."/>
            <person name="Kondo S."/>
            <person name="Konno H."/>
            <person name="Nakano K."/>
            <person name="Ninomiya N."/>
            <person name="Nishio T."/>
            <person name="Okada M."/>
            <person name="Plessy C."/>
            <person name="Shibata K."/>
            <person name="Shiraki T."/>
            <person name="Suzuki S."/>
            <person name="Tagami M."/>
            <person name="Waki K."/>
            <person name="Watahiki A."/>
            <person name="Okamura-Oho Y."/>
            <person name="Suzuki H."/>
            <person name="Kawai J."/>
            <person name="Hayashizaki Y."/>
        </authorList>
    </citation>
    <scope>NUCLEOTIDE SEQUENCE [LARGE SCALE MRNA] (ISOFORM 1)</scope>
    <source>
        <strain>C57BL/6J</strain>
    </source>
</reference>
<reference key="4">
    <citation type="submission" date="2005-07" db="EMBL/GenBank/DDBJ databases">
        <authorList>
            <person name="Mural R.J."/>
            <person name="Adams M.D."/>
            <person name="Myers E.W."/>
            <person name="Smith H.O."/>
            <person name="Venter J.C."/>
        </authorList>
    </citation>
    <scope>NUCLEOTIDE SEQUENCE [LARGE SCALE GENOMIC DNA]</scope>
</reference>
<reference key="5">
    <citation type="journal article" date="2004" name="Genome Res.">
        <title>The status, quality, and expansion of the NIH full-length cDNA project: the Mammalian Gene Collection (MGC).</title>
        <authorList>
            <consortium name="The MGC Project Team"/>
        </authorList>
    </citation>
    <scope>NUCLEOTIDE SEQUENCE [LARGE SCALE MRNA] (ISOFORM 2)</scope>
    <source>
        <tissue>Brain</tissue>
    </source>
</reference>
<reference key="6">
    <citation type="journal article" date="2007" name="J. Biol. Chem.">
        <title>Oct4 and Sox2 directly regulate expression of another pluripotency transcription factor, Zfp206, in embryonic stem cells.</title>
        <authorList>
            <person name="Wang Z.X."/>
            <person name="Teh C.H."/>
            <person name="Kueh J.L."/>
            <person name="Lufkin T."/>
            <person name="Robson P."/>
            <person name="Stanton L.W."/>
        </authorList>
    </citation>
    <scope>INDUCTION</scope>
</reference>
<reference key="7">
    <citation type="journal article" date="2009" name="J. Biol. Chem.">
        <title>Zfp206, Oct4, and Sox2 are integrated components of a transcriptional regulatory network in embryonic stem cells.</title>
        <authorList>
            <person name="Yu H.B."/>
            <person name="Kunarso G."/>
            <person name="Hong F.H."/>
            <person name="Stanton L.W."/>
        </authorList>
    </citation>
    <scope>FUNCTION</scope>
    <scope>DNA-BINDING</scope>
    <scope>INTERACTION WITH POU5F1 AND SOX2</scope>
</reference>
<reference key="8">
    <citation type="journal article" date="2024" name="Brain">
        <title>ZSCAN10 deficiency causes a neurodevelopmental disorder with characteristic oto-facial malformations.</title>
        <authorList>
            <person name="Laugwitz L."/>
            <person name="Cheng F."/>
            <person name="Collins S.C."/>
            <person name="Hustinx A."/>
            <person name="Navarro N."/>
            <person name="Welsch S."/>
            <person name="Cox H."/>
            <person name="Hsieh T.C."/>
            <person name="Vijayananth A."/>
            <person name="Buchert R."/>
            <person name="Bender B."/>
            <person name="Efthymiou S."/>
            <person name="Murphy D."/>
            <person name="Zafar F."/>
            <person name="Rana N."/>
            <person name="Grasshoff U."/>
            <person name="Falb R.J."/>
            <person name="Grimmel M."/>
            <person name="Seibt A."/>
            <person name="Zheng W."/>
            <person name="Ghaedi H."/>
            <person name="Thirion M."/>
            <person name="Couette S."/>
            <person name="Azizimalamiri R."/>
            <person name="Sadeghian S."/>
            <person name="Galehdari H."/>
            <person name="Zamani M."/>
            <person name="Zeighami J."/>
            <person name="Sedaghat A."/>
            <person name="Ramshe S.M."/>
            <person name="Zare A."/>
            <person name="Alipoor B."/>
            <person name="Klee D."/>
            <person name="Sturm M."/>
            <person name="Ossowski S."/>
            <person name="Houlden H."/>
            <person name="Riess O."/>
            <person name="Wieczorek D."/>
            <person name="Gavin R."/>
            <person name="Maroofian R."/>
            <person name="Krawitz P."/>
            <person name="Yalcin B."/>
            <person name="Distelmaier F."/>
            <person name="Haack T.B."/>
        </authorList>
    </citation>
    <scope>DISRUPTION PHENOTYPE</scope>
</reference>